<reference key="1">
    <citation type="submission" date="2006-10" db="EMBL/GenBank/DDBJ databases">
        <authorList>
            <consortium name="Sanger Xenopus tropicalis EST/cDNA project"/>
        </authorList>
    </citation>
    <scope>NUCLEOTIDE SEQUENCE [LARGE SCALE MRNA]</scope>
    <source>
        <tissue>Gastrula</tissue>
    </source>
</reference>
<reference key="2">
    <citation type="journal article" date="2004" name="J. Biol. Chem.">
        <title>Association of the breast cancer protein MLN51 with the exon junction complex via its speckle localizer and RNA binding module.</title>
        <authorList>
            <person name="Degot S."/>
            <person name="Le Hir H."/>
            <person name="Alpy F."/>
            <person name="Kedinger V."/>
            <person name="Stoll I."/>
            <person name="Wendling C."/>
            <person name="Seraphin B."/>
            <person name="Rio M.-C."/>
            <person name="Tomasetto C."/>
        </authorList>
    </citation>
    <scope>IDENTIFICATION</scope>
</reference>
<name>CASC3_XENTR</name>
<comment type="function">
    <text evidence="1">Required for pre-mRNA splicing as component of the spliceosome. Core component of the splicing-dependent multiprotein exon junction complex (EJC) deposited at splice junctions on mRNAs. The EJC is a dynamic structure consisting of core proteins and several peripheral nuclear and cytoplasmic associated factors that join the complex only transiently either during EJC assembly or during subsequent mRNA metabolism. The EJC marks the position of the exon-exon junction in the mature mRNA for the gene expression machinery and the core components remain bound to spliced mRNAs throughout all stages of mRNA metabolism thereby influencing downstream processes including nuclear mRNA export, subcellular mRNA localization, translation efficiency and nonsense-mediated mRNA decay (NMD). Binds spliced mRNA in sequence-independent manner, 20-24 nucleotides upstream of mRNA exon-exon junctions.</text>
</comment>
<comment type="subunit">
    <text evidence="1 3">Identified in the spliceosome C complex. Component of the mRNA splicing-dependent exon junction complex (EJC), which contains at least casc3, eif4a3, magoh, nxf1 and rbm8a (By similarity). Forms homooligomers (By similarity).</text>
</comment>
<comment type="subcellular location">
    <subcellularLocation>
        <location evidence="1">Cytoplasm</location>
    </subcellularLocation>
    <subcellularLocation>
        <location evidence="2">Cytoplasm</location>
        <location evidence="2">Perinuclear region</location>
    </subcellularLocation>
    <subcellularLocation>
        <location evidence="1">Nucleus</location>
    </subcellularLocation>
    <subcellularLocation>
        <location evidence="1">Nucleus speckle</location>
    </subcellularLocation>
    <subcellularLocation>
        <location evidence="1">Cytoplasm</location>
        <location evidence="1">Stress granule</location>
    </subcellularLocation>
    <subcellularLocation>
        <location evidence="3">Cytoplasm</location>
        <location evidence="3">Cytoplasmic ribonucleoprotein granule</location>
    </subcellularLocation>
    <subcellularLocation>
        <location evidence="3">Cell projection</location>
        <location evidence="3">Dendrite</location>
    </subcellularLocation>
    <text evidence="1 3">Shuttles between the nucleus and the cytoplasm in a xpo1/crm1-dependent manner. Transported to the cytoplasm as part of the exon junction complex (EJC) bound to mRNA (By similarity). In the dendrites of hippocampal neurons, localizes to dendritic ribonucleoprotein granules (By similarity).</text>
</comment>
<comment type="similarity">
    <text evidence="5">Belongs to the CASC3 family.</text>
</comment>
<gene>
    <name type="primary">casc3</name>
    <name type="synonym">mln51</name>
</gene>
<organism>
    <name type="scientific">Xenopus tropicalis</name>
    <name type="common">Western clawed frog</name>
    <name type="synonym">Silurana tropicalis</name>
    <dbReference type="NCBI Taxonomy" id="8364"/>
    <lineage>
        <taxon>Eukaryota</taxon>
        <taxon>Metazoa</taxon>
        <taxon>Chordata</taxon>
        <taxon>Craniata</taxon>
        <taxon>Vertebrata</taxon>
        <taxon>Euteleostomi</taxon>
        <taxon>Amphibia</taxon>
        <taxon>Batrachia</taxon>
        <taxon>Anura</taxon>
        <taxon>Pipoidea</taxon>
        <taxon>Pipidae</taxon>
        <taxon>Xenopodinae</taxon>
        <taxon>Xenopus</taxon>
        <taxon>Silurana</taxon>
    </lineage>
</organism>
<protein>
    <recommendedName>
        <fullName>Protein CASC3</fullName>
    </recommendedName>
    <alternativeName>
        <fullName>Cancer susceptibility candidate gene 3 protein homolog</fullName>
    </alternativeName>
    <alternativeName>
        <fullName>Metastatic lymph node protein 51 homolog</fullName>
        <shortName>Protein MLN 51 homolog</shortName>
        <shortName>StMLN51</shortName>
    </alternativeName>
</protein>
<accession>Q5CZI8</accession>
<proteinExistence type="evidence at transcript level"/>
<dbReference type="EMBL" id="CR855779">
    <property type="status" value="NOT_ANNOTATED_CDS"/>
    <property type="molecule type" value="mRNA"/>
</dbReference>
<dbReference type="EMBL" id="BN000153">
    <property type="protein sequence ID" value="CAD88273.1"/>
    <property type="molecule type" value="mRNA"/>
</dbReference>
<dbReference type="RefSeq" id="NP_001012670.1">
    <property type="nucleotide sequence ID" value="NM_001012652.1"/>
</dbReference>
<dbReference type="FunCoup" id="Q5CZI8">
    <property type="interactions" value="3867"/>
</dbReference>
<dbReference type="STRING" id="8364.ENSXETP00000004034"/>
<dbReference type="PaxDb" id="8364-ENSXETP00000052759"/>
<dbReference type="GeneID" id="503560"/>
<dbReference type="KEGG" id="xtr:503560"/>
<dbReference type="AGR" id="Xenbase:XB-GENE-969211"/>
<dbReference type="CTD" id="22794"/>
<dbReference type="Xenbase" id="XB-GENE-969211">
    <property type="gene designation" value="casc3"/>
</dbReference>
<dbReference type="eggNOG" id="KOG4264">
    <property type="taxonomic scope" value="Eukaryota"/>
</dbReference>
<dbReference type="InParanoid" id="Q5CZI8"/>
<dbReference type="OrthoDB" id="657902at2759"/>
<dbReference type="Reactome" id="R-XTR-72163">
    <property type="pathway name" value="mRNA Splicing - Major Pathway"/>
</dbReference>
<dbReference type="Reactome" id="R-XTR-975957">
    <property type="pathway name" value="Nonsense Mediated Decay (NMD) enhanced by the Exon Junction Complex (EJC)"/>
</dbReference>
<dbReference type="Proteomes" id="UP000008143">
    <property type="component" value="Chromosome 10"/>
</dbReference>
<dbReference type="GO" id="GO:0010494">
    <property type="term" value="C:cytoplasmic stress granule"/>
    <property type="evidence" value="ECO:0007669"/>
    <property type="project" value="UniProtKB-SubCell"/>
</dbReference>
<dbReference type="GO" id="GO:0030425">
    <property type="term" value="C:dendrite"/>
    <property type="evidence" value="ECO:0007669"/>
    <property type="project" value="UniProtKB-SubCell"/>
</dbReference>
<dbReference type="GO" id="GO:0035145">
    <property type="term" value="C:exon-exon junction complex"/>
    <property type="evidence" value="ECO:0007669"/>
    <property type="project" value="InterPro"/>
</dbReference>
<dbReference type="GO" id="GO:0016607">
    <property type="term" value="C:nuclear speck"/>
    <property type="evidence" value="ECO:0007669"/>
    <property type="project" value="UniProtKB-SubCell"/>
</dbReference>
<dbReference type="GO" id="GO:0005634">
    <property type="term" value="C:nucleus"/>
    <property type="evidence" value="ECO:0000250"/>
    <property type="project" value="UniProtKB"/>
</dbReference>
<dbReference type="GO" id="GO:0048471">
    <property type="term" value="C:perinuclear region of cytoplasm"/>
    <property type="evidence" value="ECO:0007669"/>
    <property type="project" value="UniProtKB-SubCell"/>
</dbReference>
<dbReference type="GO" id="GO:0071006">
    <property type="term" value="C:U2-type catalytic step 1 spliceosome"/>
    <property type="evidence" value="ECO:0000250"/>
    <property type="project" value="UniProtKB"/>
</dbReference>
<dbReference type="GO" id="GO:0003729">
    <property type="term" value="F:mRNA binding"/>
    <property type="evidence" value="ECO:0007669"/>
    <property type="project" value="InterPro"/>
</dbReference>
<dbReference type="GO" id="GO:0000398">
    <property type="term" value="P:mRNA splicing, via spliceosome"/>
    <property type="evidence" value="ECO:0000250"/>
    <property type="project" value="UniProtKB"/>
</dbReference>
<dbReference type="GO" id="GO:0051028">
    <property type="term" value="P:mRNA transport"/>
    <property type="evidence" value="ECO:0007669"/>
    <property type="project" value="UniProtKB-KW"/>
</dbReference>
<dbReference type="GO" id="GO:0000184">
    <property type="term" value="P:nuclear-transcribed mRNA catabolic process, nonsense-mediated decay"/>
    <property type="evidence" value="ECO:0007669"/>
    <property type="project" value="UniProtKB-KW"/>
</dbReference>
<dbReference type="GO" id="GO:0006417">
    <property type="term" value="P:regulation of translation"/>
    <property type="evidence" value="ECO:0007669"/>
    <property type="project" value="UniProtKB-KW"/>
</dbReference>
<dbReference type="InterPro" id="IPR018545">
    <property type="entry name" value="Btz_dom"/>
</dbReference>
<dbReference type="InterPro" id="IPR028544">
    <property type="entry name" value="CASC3"/>
</dbReference>
<dbReference type="PANTHER" id="PTHR13434">
    <property type="entry name" value="PROTEIN CASC3"/>
    <property type="match status" value="1"/>
</dbReference>
<dbReference type="PANTHER" id="PTHR13434:SF0">
    <property type="entry name" value="PROTEIN CASC3"/>
    <property type="match status" value="1"/>
</dbReference>
<dbReference type="Pfam" id="PF09405">
    <property type="entry name" value="Btz"/>
    <property type="match status" value="1"/>
</dbReference>
<dbReference type="SMART" id="SM01044">
    <property type="entry name" value="Btz"/>
    <property type="match status" value="1"/>
</dbReference>
<evidence type="ECO:0000250" key="1">
    <source>
        <dbReference type="UniProtKB" id="O15234"/>
    </source>
</evidence>
<evidence type="ECO:0000250" key="2">
    <source>
        <dbReference type="UniProtKB" id="Q8K3W3"/>
    </source>
</evidence>
<evidence type="ECO:0000250" key="3">
    <source>
        <dbReference type="UniProtKB" id="Q8K3X0"/>
    </source>
</evidence>
<evidence type="ECO:0000256" key="4">
    <source>
        <dbReference type="SAM" id="MobiDB-lite"/>
    </source>
</evidence>
<evidence type="ECO:0000305" key="5"/>
<feature type="chain" id="PRO_0000379476" description="Protein CASC3">
    <location>
        <begin position="1"/>
        <end position="678"/>
    </location>
</feature>
<feature type="region of interest" description="Disordered" evidence="4">
    <location>
        <begin position="1"/>
        <end position="412"/>
    </location>
</feature>
<feature type="region of interest" description="Disordered" evidence="4">
    <location>
        <begin position="637"/>
        <end position="678"/>
    </location>
</feature>
<feature type="compositionally biased region" description="Basic residues" evidence="4">
    <location>
        <begin position="1"/>
        <end position="10"/>
    </location>
</feature>
<feature type="compositionally biased region" description="Acidic residues" evidence="4">
    <location>
        <begin position="14"/>
        <end position="24"/>
    </location>
</feature>
<feature type="compositionally biased region" description="Low complexity" evidence="4">
    <location>
        <begin position="25"/>
        <end position="38"/>
    </location>
</feature>
<feature type="compositionally biased region" description="Basic and acidic residues" evidence="4">
    <location>
        <begin position="40"/>
        <end position="60"/>
    </location>
</feature>
<feature type="compositionally biased region" description="Polar residues" evidence="4">
    <location>
        <begin position="124"/>
        <end position="133"/>
    </location>
</feature>
<feature type="compositionally biased region" description="Basic and acidic residues" evidence="4">
    <location>
        <begin position="166"/>
        <end position="183"/>
    </location>
</feature>
<feature type="compositionally biased region" description="Basic and acidic residues" evidence="4">
    <location>
        <begin position="191"/>
        <end position="216"/>
    </location>
</feature>
<feature type="compositionally biased region" description="Basic and acidic residues" evidence="4">
    <location>
        <begin position="225"/>
        <end position="235"/>
    </location>
</feature>
<feature type="compositionally biased region" description="Basic and acidic residues" evidence="4">
    <location>
        <begin position="247"/>
        <end position="257"/>
    </location>
</feature>
<feature type="compositionally biased region" description="Polar residues" evidence="4">
    <location>
        <begin position="258"/>
        <end position="269"/>
    </location>
</feature>
<feature type="compositionally biased region" description="Basic and acidic residues" evidence="4">
    <location>
        <begin position="311"/>
        <end position="324"/>
    </location>
</feature>
<feature type="compositionally biased region" description="Basic and acidic residues" evidence="4">
    <location>
        <begin position="346"/>
        <end position="358"/>
    </location>
</feature>
<feature type="compositionally biased region" description="Basic and acidic residues" evidence="4">
    <location>
        <begin position="384"/>
        <end position="393"/>
    </location>
</feature>
<feature type="compositionally biased region" description="Basic and acidic residues" evidence="4">
    <location>
        <begin position="663"/>
        <end position="678"/>
    </location>
</feature>
<keyword id="KW-0966">Cell projection</keyword>
<keyword id="KW-0963">Cytoplasm</keyword>
<keyword id="KW-0507">mRNA processing</keyword>
<keyword id="KW-0508">mRNA splicing</keyword>
<keyword id="KW-0509">mRNA transport</keyword>
<keyword id="KW-0866">Nonsense-mediated mRNA decay</keyword>
<keyword id="KW-0539">Nucleus</keyword>
<keyword id="KW-1185">Reference proteome</keyword>
<keyword id="KW-0694">RNA-binding</keyword>
<keyword id="KW-0747">Spliceosome</keyword>
<keyword id="KW-0810">Translation regulation</keyword>
<keyword id="KW-0813">Transport</keyword>
<sequence>MADRRRRRRRAFQDSEEEEDEESGSESAGSGGQPAAPSRQESREPGTKRAEPPREGKESECESEDGIEGDAVLSDYESAESEEEEAHLSEEEPLKTTLKQENNVEEAPATREQKPKSKGAVTGERQSGDGQESTEPEENKTSKKSQKQLDDDEDRKNPAYIPRKGLFFEHDLRGHVNDEEVRPKGRHPRKLWKDEGRWEHDRFREDEQAPKSREELISIYGYDIRSSKNSEEIRPRRPRKPRFGSPTRREEISEKPSRPSNRYQDSGISQPLRPYTNRNAPPSNKVGPSRTYSRQGGYKENRSSYQSEEEAPPHPSERRQDYGGHRARSTEQGPAPPREFSPEADPIIKEEPVIEKQAAEPSPPPPDRPVEKKSYSRVRRSRIKVGDTGKSMEDTTVTELPPPPPVPPAVAAEFTPAPLNVKQGNWEPPSEGGMSGIEEELSQMNLSEQSWNPGQPAYISPRGIPNPMHMGGGPPQYNRMEGMAVQGGRVKRYSTQRQRPVPDPAAMHISLMESHYYDPLQFQGPIYAHGDSPSSMPPQGMIVQPEMHLSHPGIHPHQPPATISTPNLYPAPVSLPPGQPPPQQLLPPPYFTAPPNVMNFGNPTYPYPPGALPPPPAHLYPNAQAQSQVYGGVTYYNPVQQQVQPKPSPPRRTSQPVTIKPPPPEENRHVKMKEKSNS</sequence>